<keyword id="KW-0255">Endonuclease</keyword>
<keyword id="KW-0378">Hydrolase</keyword>
<keyword id="KW-0540">Nuclease</keyword>
<keyword id="KW-0548">Nucleotidyltransferase</keyword>
<keyword id="KW-1185">Reference proteome</keyword>
<keyword id="KW-0695">RNA-directed DNA polymerase</keyword>
<keyword id="KW-0808">Transferase</keyword>
<keyword id="KW-0814">Transposable element</keyword>
<accession>Q03269</accession>
<protein>
    <recommendedName>
        <fullName>Retrovirus-related Pol polyprotein from type-1 retrotransposable element R1</fullName>
    </recommendedName>
    <alternativeName>
        <fullName>Retrovirus-related Pol polyprotein from type I retrotransposable element R1</fullName>
    </alternativeName>
    <domain>
        <recommendedName>
            <fullName>Reverse transcriptase</fullName>
            <ecNumber>2.7.7.49</ecNumber>
        </recommendedName>
    </domain>
    <domain>
        <recommendedName>
            <fullName>Endonuclease</fullName>
        </recommendedName>
    </domain>
</protein>
<proteinExistence type="predicted"/>
<evidence type="ECO:0000255" key="1">
    <source>
        <dbReference type="PROSITE-ProRule" id="PRU00405"/>
    </source>
</evidence>
<comment type="catalytic activity">
    <reaction evidence="1">
        <text>DNA(n) + a 2'-deoxyribonucleoside 5'-triphosphate = DNA(n+1) + diphosphate</text>
        <dbReference type="Rhea" id="RHEA:22508"/>
        <dbReference type="Rhea" id="RHEA-COMP:17339"/>
        <dbReference type="Rhea" id="RHEA-COMP:17340"/>
        <dbReference type="ChEBI" id="CHEBI:33019"/>
        <dbReference type="ChEBI" id="CHEBI:61560"/>
        <dbReference type="ChEBI" id="CHEBI:173112"/>
        <dbReference type="EC" id="2.7.7.49"/>
    </reaction>
</comment>
<reference key="1">
    <citation type="journal article" date="1993" name="Mol. Biol. Evol.">
        <title>Sequence relationship of retrotransposable elements R1 and R2 within and between divergent insect species.</title>
        <authorList>
            <person name="Burke W.D."/>
            <person name="Eickbush D.G."/>
            <person name="Xiong Y."/>
            <person name="Jakubczak J.L."/>
            <person name="Eickbush T.H."/>
        </authorList>
    </citation>
    <scope>NUCLEOTIDE SEQUENCE [GENOMIC DNA]</scope>
</reference>
<feature type="chain" id="PRO_0000058491" description="Retrovirus-related Pol polyprotein from type-1 retrotransposable element R1">
    <location>
        <begin position="1" status="less than"/>
        <end position="337"/>
    </location>
</feature>
<feature type="domain" description="Reverse transcriptase" evidence="1">
    <location>
        <begin position="1" status="less than"/>
        <end position="118"/>
    </location>
</feature>
<feature type="region of interest" description="Nucleic acid-binding endonuclease">
    <location>
        <begin position="253"/>
        <end position="337"/>
    </location>
</feature>
<feature type="non-terminal residue">
    <location>
        <position position="1"/>
    </location>
</feature>
<sequence length="337" mass="38330">GCPQGSISGPYMWNLCMNGLLDRLSAMNERIVAYADDLMIVANGNSRMEMERMADECMRIVYEWGREVGVSISEKKTVCIMLKGKLNVDGRRMRVAVAEGTISSIGYVKSARYLGVCMGERMSFADDIRGLITKVMGAIGGLRRVMRKEWGVKKKTAYTWAKGLLLAGVMYGSSVWYEGMKYKTMRESMNSIQRCAMYACLRVCRTVSTEAMQVLLGWLPCDLECVKDKCVQGSAWHRNDESDLVTDAEIAEKRARSCKLMKEREHEIWQRRWCESTKGRVMHEWLCDVNFACERMWFEPSLRVGYILTGHGTLNAWLYDRDPLDSAACPCGAPRED</sequence>
<name>PO11_NASVI</name>
<organism>
    <name type="scientific">Nasonia vitripennis</name>
    <name type="common">Parasitic wasp</name>
    <dbReference type="NCBI Taxonomy" id="7425"/>
    <lineage>
        <taxon>Eukaryota</taxon>
        <taxon>Metazoa</taxon>
        <taxon>Ecdysozoa</taxon>
        <taxon>Arthropoda</taxon>
        <taxon>Hexapoda</taxon>
        <taxon>Insecta</taxon>
        <taxon>Pterygota</taxon>
        <taxon>Neoptera</taxon>
        <taxon>Endopterygota</taxon>
        <taxon>Hymenoptera</taxon>
        <taxon>Apocrita</taxon>
        <taxon>Proctotrupomorpha</taxon>
        <taxon>Chalcidoidea</taxon>
        <taxon>Pteromalidae</taxon>
        <taxon>Pteromalinae</taxon>
        <taxon>Nasonia</taxon>
    </lineage>
</organism>
<dbReference type="EC" id="2.7.7.49"/>
<dbReference type="EMBL" id="L00940">
    <property type="protein sequence ID" value="AAA30337.1"/>
    <property type="molecule type" value="Genomic_DNA"/>
</dbReference>
<dbReference type="PIR" id="B44490">
    <property type="entry name" value="B44490"/>
</dbReference>
<dbReference type="STRING" id="7425.Q03269"/>
<dbReference type="InParanoid" id="Q03269"/>
<dbReference type="OrthoDB" id="6516885at2759"/>
<dbReference type="Proteomes" id="UP000002358">
    <property type="component" value="Unplaced"/>
</dbReference>
<dbReference type="GO" id="GO:0004519">
    <property type="term" value="F:endonuclease activity"/>
    <property type="evidence" value="ECO:0007669"/>
    <property type="project" value="UniProtKB-KW"/>
</dbReference>
<dbReference type="GO" id="GO:0003964">
    <property type="term" value="F:RNA-directed DNA polymerase activity"/>
    <property type="evidence" value="ECO:0007669"/>
    <property type="project" value="UniProtKB-KW"/>
</dbReference>
<dbReference type="InterPro" id="IPR043502">
    <property type="entry name" value="DNA/RNA_pol_sf"/>
</dbReference>
<dbReference type="InterPro" id="IPR000477">
    <property type="entry name" value="RT_dom"/>
</dbReference>
<dbReference type="Pfam" id="PF00078">
    <property type="entry name" value="RVT_1"/>
    <property type="match status" value="1"/>
</dbReference>
<dbReference type="SUPFAM" id="SSF56672">
    <property type="entry name" value="DNA/RNA polymerases"/>
    <property type="match status" value="1"/>
</dbReference>
<dbReference type="PROSITE" id="PS50878">
    <property type="entry name" value="RT_POL"/>
    <property type="match status" value="1"/>
</dbReference>